<reference key="1">
    <citation type="journal article" date="2002" name="Proc. Natl. Acad. Sci. U.S.A.">
        <title>Complete genome sequence and comparative genomic analysis of an emerging human pathogen, serotype V Streptococcus agalactiae.</title>
        <authorList>
            <person name="Tettelin H."/>
            <person name="Masignani V."/>
            <person name="Cieslewicz M.J."/>
            <person name="Eisen J.A."/>
            <person name="Peterson S.N."/>
            <person name="Wessels M.R."/>
            <person name="Paulsen I.T."/>
            <person name="Nelson K.E."/>
            <person name="Margarit I."/>
            <person name="Read T.D."/>
            <person name="Madoff L.C."/>
            <person name="Wolf A.M."/>
            <person name="Beanan M.J."/>
            <person name="Brinkac L.M."/>
            <person name="Daugherty S.C."/>
            <person name="DeBoy R.T."/>
            <person name="Durkin A.S."/>
            <person name="Kolonay J.F."/>
            <person name="Madupu R."/>
            <person name="Lewis M.R."/>
            <person name="Radune D."/>
            <person name="Fedorova N.B."/>
            <person name="Scanlan D."/>
            <person name="Khouri H.M."/>
            <person name="Mulligan S."/>
            <person name="Carty H.A."/>
            <person name="Cline R.T."/>
            <person name="Van Aken S.E."/>
            <person name="Gill J."/>
            <person name="Scarselli M."/>
            <person name="Mora M."/>
            <person name="Iacobini E.T."/>
            <person name="Brettoni C."/>
            <person name="Galli G."/>
            <person name="Mariani M."/>
            <person name="Vegni F."/>
            <person name="Maione D."/>
            <person name="Rinaudo D."/>
            <person name="Rappuoli R."/>
            <person name="Telford J.L."/>
            <person name="Kasper D.L."/>
            <person name="Grandi G."/>
            <person name="Fraser C.M."/>
        </authorList>
    </citation>
    <scope>NUCLEOTIDE SEQUENCE [LARGE SCALE GENOMIC DNA]</scope>
    <source>
        <strain>ATCC BAA-611 / 2603 V/R</strain>
    </source>
</reference>
<feature type="chain" id="PRO_0000386291" description="GTPase Obg">
    <location>
        <begin position="1"/>
        <end position="437"/>
    </location>
</feature>
<feature type="domain" description="Obg" evidence="3">
    <location>
        <begin position="2"/>
        <end position="160"/>
    </location>
</feature>
<feature type="domain" description="OBG-type G" evidence="1">
    <location>
        <begin position="161"/>
        <end position="338"/>
    </location>
</feature>
<feature type="domain" description="OCT" evidence="2">
    <location>
        <begin position="359"/>
        <end position="437"/>
    </location>
</feature>
<feature type="binding site" evidence="1">
    <location>
        <begin position="167"/>
        <end position="174"/>
    </location>
    <ligand>
        <name>GTP</name>
        <dbReference type="ChEBI" id="CHEBI:37565"/>
    </ligand>
</feature>
<feature type="binding site" evidence="1">
    <location>
        <position position="174"/>
    </location>
    <ligand>
        <name>Mg(2+)</name>
        <dbReference type="ChEBI" id="CHEBI:18420"/>
    </ligand>
</feature>
<feature type="binding site" evidence="1">
    <location>
        <begin position="192"/>
        <end position="196"/>
    </location>
    <ligand>
        <name>GTP</name>
        <dbReference type="ChEBI" id="CHEBI:37565"/>
    </ligand>
</feature>
<feature type="binding site" evidence="1">
    <location>
        <position position="194"/>
    </location>
    <ligand>
        <name>Mg(2+)</name>
        <dbReference type="ChEBI" id="CHEBI:18420"/>
    </ligand>
</feature>
<feature type="binding site" evidence="1">
    <location>
        <begin position="214"/>
        <end position="217"/>
    </location>
    <ligand>
        <name>GTP</name>
        <dbReference type="ChEBI" id="CHEBI:37565"/>
    </ligand>
</feature>
<feature type="binding site" evidence="1">
    <location>
        <begin position="284"/>
        <end position="287"/>
    </location>
    <ligand>
        <name>GTP</name>
        <dbReference type="ChEBI" id="CHEBI:37565"/>
    </ligand>
</feature>
<feature type="binding site" evidence="1">
    <location>
        <begin position="319"/>
        <end position="321"/>
    </location>
    <ligand>
        <name>GTP</name>
        <dbReference type="ChEBI" id="CHEBI:37565"/>
    </ligand>
</feature>
<proteinExistence type="inferred from homology"/>
<name>OBG_STRA5</name>
<organism>
    <name type="scientific">Streptococcus agalactiae serotype V (strain ATCC BAA-611 / 2603 V/R)</name>
    <dbReference type="NCBI Taxonomy" id="208435"/>
    <lineage>
        <taxon>Bacteria</taxon>
        <taxon>Bacillati</taxon>
        <taxon>Bacillota</taxon>
        <taxon>Bacilli</taxon>
        <taxon>Lactobacillales</taxon>
        <taxon>Streptococcaceae</taxon>
        <taxon>Streptococcus</taxon>
    </lineage>
</organism>
<protein>
    <recommendedName>
        <fullName evidence="1">GTPase Obg</fullName>
        <ecNumber evidence="1">3.6.5.-</ecNumber>
    </recommendedName>
    <alternativeName>
        <fullName evidence="1">GTP-binding protein Obg</fullName>
    </alternativeName>
</protein>
<gene>
    <name evidence="1" type="primary">obg</name>
    <name type="ordered locus">SAG1470</name>
</gene>
<dbReference type="EC" id="3.6.5.-" evidence="1"/>
<dbReference type="EMBL" id="AE009948">
    <property type="protein sequence ID" value="AAN00337.1"/>
    <property type="molecule type" value="Genomic_DNA"/>
</dbReference>
<dbReference type="RefSeq" id="NP_688464.2">
    <property type="nucleotide sequence ID" value="NC_004116.1"/>
</dbReference>
<dbReference type="SMR" id="Q8DYL0"/>
<dbReference type="STRING" id="208435.SAG1470"/>
<dbReference type="KEGG" id="sag:SAG1470"/>
<dbReference type="PATRIC" id="fig|208435.3.peg.1480"/>
<dbReference type="HOGENOM" id="CLU_011747_2_1_9"/>
<dbReference type="OrthoDB" id="9807318at2"/>
<dbReference type="Proteomes" id="UP000000821">
    <property type="component" value="Chromosome"/>
</dbReference>
<dbReference type="GO" id="GO:0005737">
    <property type="term" value="C:cytoplasm"/>
    <property type="evidence" value="ECO:0007669"/>
    <property type="project" value="UniProtKB-SubCell"/>
</dbReference>
<dbReference type="GO" id="GO:0005525">
    <property type="term" value="F:GTP binding"/>
    <property type="evidence" value="ECO:0007669"/>
    <property type="project" value="UniProtKB-UniRule"/>
</dbReference>
<dbReference type="GO" id="GO:0003924">
    <property type="term" value="F:GTPase activity"/>
    <property type="evidence" value="ECO:0007669"/>
    <property type="project" value="UniProtKB-UniRule"/>
</dbReference>
<dbReference type="GO" id="GO:0000287">
    <property type="term" value="F:magnesium ion binding"/>
    <property type="evidence" value="ECO:0007669"/>
    <property type="project" value="InterPro"/>
</dbReference>
<dbReference type="GO" id="GO:0042254">
    <property type="term" value="P:ribosome biogenesis"/>
    <property type="evidence" value="ECO:0007669"/>
    <property type="project" value="UniProtKB-UniRule"/>
</dbReference>
<dbReference type="CDD" id="cd01898">
    <property type="entry name" value="Obg"/>
    <property type="match status" value="1"/>
</dbReference>
<dbReference type="FunFam" id="2.70.210.12:FF:000001">
    <property type="entry name" value="GTPase Obg"/>
    <property type="match status" value="1"/>
</dbReference>
<dbReference type="FunFam" id="3.40.50.300:FF:000515">
    <property type="entry name" value="GTPase Obg"/>
    <property type="match status" value="1"/>
</dbReference>
<dbReference type="Gene3D" id="3.30.300.350">
    <property type="entry name" value="GTP-binding protein OBG, C-terminal domain"/>
    <property type="match status" value="1"/>
</dbReference>
<dbReference type="Gene3D" id="2.70.210.12">
    <property type="entry name" value="GTP1/OBG domain"/>
    <property type="match status" value="1"/>
</dbReference>
<dbReference type="Gene3D" id="3.40.50.300">
    <property type="entry name" value="P-loop containing nucleotide triphosphate hydrolases"/>
    <property type="match status" value="1"/>
</dbReference>
<dbReference type="HAMAP" id="MF_01454">
    <property type="entry name" value="GTPase_Obg"/>
    <property type="match status" value="1"/>
</dbReference>
<dbReference type="InterPro" id="IPR031167">
    <property type="entry name" value="G_OBG"/>
</dbReference>
<dbReference type="InterPro" id="IPR006073">
    <property type="entry name" value="GTP-bd"/>
</dbReference>
<dbReference type="InterPro" id="IPR014100">
    <property type="entry name" value="GTP-bd_Obg/CgtA"/>
</dbReference>
<dbReference type="InterPro" id="IPR036346">
    <property type="entry name" value="GTP-bd_prot_GTP1/OBG_C_sf"/>
</dbReference>
<dbReference type="InterPro" id="IPR006074">
    <property type="entry name" value="GTP1-OBG_CS"/>
</dbReference>
<dbReference type="InterPro" id="IPR006169">
    <property type="entry name" value="GTP1_OBG_dom"/>
</dbReference>
<dbReference type="InterPro" id="IPR036726">
    <property type="entry name" value="GTP1_OBG_dom_sf"/>
</dbReference>
<dbReference type="InterPro" id="IPR045086">
    <property type="entry name" value="OBG_GTPase"/>
</dbReference>
<dbReference type="InterPro" id="IPR015349">
    <property type="entry name" value="OCT_dom"/>
</dbReference>
<dbReference type="InterPro" id="IPR027417">
    <property type="entry name" value="P-loop_NTPase"/>
</dbReference>
<dbReference type="InterPro" id="IPR005225">
    <property type="entry name" value="Small_GTP-bd"/>
</dbReference>
<dbReference type="NCBIfam" id="TIGR02729">
    <property type="entry name" value="Obg_CgtA"/>
    <property type="match status" value="1"/>
</dbReference>
<dbReference type="NCBIfam" id="TIGR03595">
    <property type="entry name" value="Obg_CgtA_exten"/>
    <property type="match status" value="1"/>
</dbReference>
<dbReference type="NCBIfam" id="NF008954">
    <property type="entry name" value="PRK12296.1"/>
    <property type="match status" value="1"/>
</dbReference>
<dbReference type="NCBIfam" id="NF008955">
    <property type="entry name" value="PRK12297.1"/>
    <property type="match status" value="1"/>
</dbReference>
<dbReference type="NCBIfam" id="NF008956">
    <property type="entry name" value="PRK12299.1"/>
    <property type="match status" value="1"/>
</dbReference>
<dbReference type="NCBIfam" id="TIGR00231">
    <property type="entry name" value="small_GTP"/>
    <property type="match status" value="1"/>
</dbReference>
<dbReference type="PANTHER" id="PTHR11702">
    <property type="entry name" value="DEVELOPMENTALLY REGULATED GTP-BINDING PROTEIN-RELATED"/>
    <property type="match status" value="1"/>
</dbReference>
<dbReference type="PANTHER" id="PTHR11702:SF31">
    <property type="entry name" value="MITOCHONDRIAL RIBOSOME-ASSOCIATED GTPASE 2"/>
    <property type="match status" value="1"/>
</dbReference>
<dbReference type="Pfam" id="PF09269">
    <property type="entry name" value="DUF1967"/>
    <property type="match status" value="1"/>
</dbReference>
<dbReference type="Pfam" id="PF01018">
    <property type="entry name" value="GTP1_OBG"/>
    <property type="match status" value="1"/>
</dbReference>
<dbReference type="Pfam" id="PF01926">
    <property type="entry name" value="MMR_HSR1"/>
    <property type="match status" value="1"/>
</dbReference>
<dbReference type="PIRSF" id="PIRSF002401">
    <property type="entry name" value="GTP_bd_Obg/CgtA"/>
    <property type="match status" value="1"/>
</dbReference>
<dbReference type="PRINTS" id="PR00326">
    <property type="entry name" value="GTP1OBG"/>
</dbReference>
<dbReference type="SUPFAM" id="SSF102741">
    <property type="entry name" value="Obg GTP-binding protein C-terminal domain"/>
    <property type="match status" value="1"/>
</dbReference>
<dbReference type="SUPFAM" id="SSF82051">
    <property type="entry name" value="Obg GTP-binding protein N-terminal domain"/>
    <property type="match status" value="1"/>
</dbReference>
<dbReference type="SUPFAM" id="SSF52540">
    <property type="entry name" value="P-loop containing nucleoside triphosphate hydrolases"/>
    <property type="match status" value="1"/>
</dbReference>
<dbReference type="PROSITE" id="PS51710">
    <property type="entry name" value="G_OBG"/>
    <property type="match status" value="1"/>
</dbReference>
<dbReference type="PROSITE" id="PS00905">
    <property type="entry name" value="GTP1_OBG"/>
    <property type="match status" value="1"/>
</dbReference>
<dbReference type="PROSITE" id="PS51883">
    <property type="entry name" value="OBG"/>
    <property type="match status" value="1"/>
</dbReference>
<dbReference type="PROSITE" id="PS51881">
    <property type="entry name" value="OCT"/>
    <property type="match status" value="1"/>
</dbReference>
<keyword id="KW-0963">Cytoplasm</keyword>
<keyword id="KW-0342">GTP-binding</keyword>
<keyword id="KW-0378">Hydrolase</keyword>
<keyword id="KW-0460">Magnesium</keyword>
<keyword id="KW-0479">Metal-binding</keyword>
<keyword id="KW-0547">Nucleotide-binding</keyword>
<keyword id="KW-1185">Reference proteome</keyword>
<comment type="function">
    <text evidence="1">An essential GTPase which binds GTP, GDP and possibly (p)ppGpp with moderate affinity, with high nucleotide exchange rates and a fairly low GTP hydrolysis rate. Plays a role in control of the cell cycle, stress response, ribosome biogenesis and in those bacteria that undergo differentiation, in morphogenesis control.</text>
</comment>
<comment type="cofactor">
    <cofactor evidence="1">
        <name>Mg(2+)</name>
        <dbReference type="ChEBI" id="CHEBI:18420"/>
    </cofactor>
</comment>
<comment type="subunit">
    <text evidence="1">Monomer.</text>
</comment>
<comment type="subcellular location">
    <subcellularLocation>
        <location evidence="1">Cytoplasm</location>
    </subcellularLocation>
</comment>
<comment type="similarity">
    <text evidence="1">Belongs to the TRAFAC class OBG-HflX-like GTPase superfamily. OBG GTPase family.</text>
</comment>
<sequence length="437" mass="48396">MSMFLDTAKISVKAGRGGDGMVAFRREKYVPNGGPWGGDGGKGGSVIFKVNEGLRTLMDFRYNRNFKAKAGEKGMTKGMHGRGAEDLIVSLPPGTTVRDATTGKVITDLVEHDQEFVVARGGRGGRGNIRFATPRNPAPEIAENGEPGEERELQLELKILADVGLVGFPSVGKSTLLSVVSAAKPKIGAYHFTTIVPNLGMVRTKSGDSFAMADLPGLIEGASQGVGLGTQFLRHIERTRVILHVIDMSASEGRDPYDDYVSINNELETYNLRLMERPQIIVANKMDMPDSEENLAAFKEKLAANYDEFDDMPMIFPISSLAHQGLENLMDATAELLANTEEFLLYDETDMQEDEAYYGFNEDERPFEITRDDDATWVLYGDKLEKLFVMTNMERDESIMKFARQLRGMGVDEALRERGAKDGDIVRIGNFEFEFVD</sequence>
<evidence type="ECO:0000255" key="1">
    <source>
        <dbReference type="HAMAP-Rule" id="MF_01454"/>
    </source>
</evidence>
<evidence type="ECO:0000255" key="2">
    <source>
        <dbReference type="PROSITE-ProRule" id="PRU01229"/>
    </source>
</evidence>
<evidence type="ECO:0000255" key="3">
    <source>
        <dbReference type="PROSITE-ProRule" id="PRU01231"/>
    </source>
</evidence>
<accession>Q8DYL0</accession>